<organism>
    <name type="scientific">Chloroflexus aurantiacus (strain ATCC 29366 / DSM 635 / J-10-fl)</name>
    <dbReference type="NCBI Taxonomy" id="324602"/>
    <lineage>
        <taxon>Bacteria</taxon>
        <taxon>Bacillati</taxon>
        <taxon>Chloroflexota</taxon>
        <taxon>Chloroflexia</taxon>
        <taxon>Chloroflexales</taxon>
        <taxon>Chloroflexineae</taxon>
        <taxon>Chloroflexaceae</taxon>
        <taxon>Chloroflexus</taxon>
    </lineage>
</organism>
<sequence>MELRTVWWENDAVCLIDQRKLPHTMEVVRCTDLAAVAYAIRSMQVRGAPAIGCTAAYGMALVAQQSVALTPSALLTELVQAKATLDSQRPTAVNLAWATSRMLRRAEAVASEGVEAIKHALHAEAEAIFAEDLAMCHAIGEHGASLIPPRGHVLTHCNAGGLATAGYGTALAPIRTAFAQGRPVHVFVDETRPFLQGARLTAWELLQAGIPQTLITDNMAAFMMQRGQIDCVIVGADRIAANGDVANKIGTYGLAVLARYHNIPFYVAAPSSTIDLATASGADIPIEERDPAEVTHIAGVAIAPQGVRAAHPAFDVTPNELVTAIITERGIVRPPYLAALRQLESGR</sequence>
<accession>A9WGQ8</accession>
<reference key="1">
    <citation type="journal article" date="2011" name="BMC Genomics">
        <title>Complete genome sequence of the filamentous anoxygenic phototrophic bacterium Chloroflexus aurantiacus.</title>
        <authorList>
            <person name="Tang K.H."/>
            <person name="Barry K."/>
            <person name="Chertkov O."/>
            <person name="Dalin E."/>
            <person name="Han C.S."/>
            <person name="Hauser L.J."/>
            <person name="Honchak B.M."/>
            <person name="Karbach L.E."/>
            <person name="Land M.L."/>
            <person name="Lapidus A."/>
            <person name="Larimer F.W."/>
            <person name="Mikhailova N."/>
            <person name="Pitluck S."/>
            <person name="Pierson B.K."/>
            <person name="Blankenship R.E."/>
        </authorList>
    </citation>
    <scope>NUCLEOTIDE SEQUENCE [LARGE SCALE GENOMIC DNA]</scope>
    <source>
        <strain>ATCC 29366 / DSM 635 / J-10-fl</strain>
    </source>
</reference>
<proteinExistence type="inferred from homology"/>
<comment type="function">
    <text evidence="1">Catalyzes the interconversion of methylthioribose-1-phosphate (MTR-1-P) into methylthioribulose-1-phosphate (MTRu-1-P).</text>
</comment>
<comment type="catalytic activity">
    <reaction evidence="1">
        <text>5-(methylsulfanyl)-alpha-D-ribose 1-phosphate = 5-(methylsulfanyl)-D-ribulose 1-phosphate</text>
        <dbReference type="Rhea" id="RHEA:19989"/>
        <dbReference type="ChEBI" id="CHEBI:58533"/>
        <dbReference type="ChEBI" id="CHEBI:58548"/>
        <dbReference type="EC" id="5.3.1.23"/>
    </reaction>
</comment>
<comment type="pathway">
    <text evidence="1">Amino-acid biosynthesis; L-methionine biosynthesis via salvage pathway; L-methionine from S-methyl-5-thio-alpha-D-ribose 1-phosphate: step 1/6.</text>
</comment>
<comment type="similarity">
    <text evidence="2">Belongs to the eIF-2B alpha/beta/delta subunits family. MtnA subfamily.</text>
</comment>
<name>MTNA_CHLAA</name>
<gene>
    <name evidence="1" type="primary">mtnA</name>
    <name type="ordered locus">Caur_3025</name>
</gene>
<feature type="chain" id="PRO_0000357160" description="Methylthioribose-1-phosphate isomerase">
    <location>
        <begin position="1"/>
        <end position="347"/>
    </location>
</feature>
<feature type="active site" description="Proton donor" evidence="1">
    <location>
        <position position="237"/>
    </location>
</feature>
<feature type="binding site" evidence="1">
    <location>
        <begin position="46"/>
        <end position="48"/>
    </location>
    <ligand>
        <name>substrate</name>
    </ligand>
</feature>
<feature type="binding site" evidence="1">
    <location>
        <position position="89"/>
    </location>
    <ligand>
        <name>substrate</name>
    </ligand>
</feature>
<feature type="binding site" evidence="1">
    <location>
        <position position="196"/>
    </location>
    <ligand>
        <name>substrate</name>
    </ligand>
</feature>
<feature type="binding site" evidence="1">
    <location>
        <begin position="247"/>
        <end position="248"/>
    </location>
    <ligand>
        <name>substrate</name>
    </ligand>
</feature>
<feature type="site" description="Transition state stabilizer" evidence="1">
    <location>
        <position position="157"/>
    </location>
</feature>
<dbReference type="EC" id="5.3.1.23" evidence="1"/>
<dbReference type="EMBL" id="CP000909">
    <property type="protein sequence ID" value="ABY36224.1"/>
    <property type="molecule type" value="Genomic_DNA"/>
</dbReference>
<dbReference type="RefSeq" id="WP_012258877.1">
    <property type="nucleotide sequence ID" value="NC_010175.1"/>
</dbReference>
<dbReference type="RefSeq" id="YP_001636613.1">
    <property type="nucleotide sequence ID" value="NC_010175.1"/>
</dbReference>
<dbReference type="SMR" id="A9WGQ8"/>
<dbReference type="FunCoup" id="A9WGQ8">
    <property type="interactions" value="419"/>
</dbReference>
<dbReference type="STRING" id="324602.Caur_3025"/>
<dbReference type="EnsemblBacteria" id="ABY36224">
    <property type="protein sequence ID" value="ABY36224"/>
    <property type="gene ID" value="Caur_3025"/>
</dbReference>
<dbReference type="KEGG" id="cau:Caur_3025"/>
<dbReference type="PATRIC" id="fig|324602.8.peg.3426"/>
<dbReference type="eggNOG" id="COG0182">
    <property type="taxonomic scope" value="Bacteria"/>
</dbReference>
<dbReference type="HOGENOM" id="CLU_016218_1_2_0"/>
<dbReference type="InParanoid" id="A9WGQ8"/>
<dbReference type="UniPathway" id="UPA00904">
    <property type="reaction ID" value="UER00874"/>
</dbReference>
<dbReference type="Proteomes" id="UP000002008">
    <property type="component" value="Chromosome"/>
</dbReference>
<dbReference type="GO" id="GO:0046523">
    <property type="term" value="F:S-methyl-5-thioribose-1-phosphate isomerase activity"/>
    <property type="evidence" value="ECO:0000318"/>
    <property type="project" value="GO_Central"/>
</dbReference>
<dbReference type="GO" id="GO:0019509">
    <property type="term" value="P:L-methionine salvage from methylthioadenosine"/>
    <property type="evidence" value="ECO:0000318"/>
    <property type="project" value="GO_Central"/>
</dbReference>
<dbReference type="FunFam" id="1.20.120.420:FF:000007">
    <property type="entry name" value="Methylthioribose-1-phosphate isomerase"/>
    <property type="match status" value="1"/>
</dbReference>
<dbReference type="FunFam" id="3.40.50.10470:FF:000010">
    <property type="entry name" value="Methylthioribose-1-phosphate isomerase"/>
    <property type="match status" value="1"/>
</dbReference>
<dbReference type="Gene3D" id="1.20.120.420">
    <property type="entry name" value="translation initiation factor eif-2b, domain 1"/>
    <property type="match status" value="1"/>
</dbReference>
<dbReference type="Gene3D" id="3.40.50.10470">
    <property type="entry name" value="Translation initiation factor eif-2b, domain 2"/>
    <property type="match status" value="1"/>
</dbReference>
<dbReference type="HAMAP" id="MF_01678">
    <property type="entry name" value="Salvage_MtnA"/>
    <property type="match status" value="1"/>
</dbReference>
<dbReference type="InterPro" id="IPR000649">
    <property type="entry name" value="IF-2B-related"/>
</dbReference>
<dbReference type="InterPro" id="IPR005251">
    <property type="entry name" value="IF-M1Pi"/>
</dbReference>
<dbReference type="InterPro" id="IPR042529">
    <property type="entry name" value="IF_2B-like_C"/>
</dbReference>
<dbReference type="InterPro" id="IPR011559">
    <property type="entry name" value="Initiation_fac_2B_a/b/d"/>
</dbReference>
<dbReference type="InterPro" id="IPR027363">
    <property type="entry name" value="M1Pi_N"/>
</dbReference>
<dbReference type="InterPro" id="IPR037171">
    <property type="entry name" value="NagB/RpiA_transferase-like"/>
</dbReference>
<dbReference type="NCBIfam" id="TIGR00524">
    <property type="entry name" value="eIF-2B_rel"/>
    <property type="match status" value="1"/>
</dbReference>
<dbReference type="NCBIfam" id="NF004326">
    <property type="entry name" value="PRK05720.1"/>
    <property type="match status" value="1"/>
</dbReference>
<dbReference type="NCBIfam" id="TIGR00512">
    <property type="entry name" value="salvage_mtnA"/>
    <property type="match status" value="1"/>
</dbReference>
<dbReference type="PANTHER" id="PTHR43475">
    <property type="entry name" value="METHYLTHIORIBOSE-1-PHOSPHATE ISOMERASE"/>
    <property type="match status" value="1"/>
</dbReference>
<dbReference type="PANTHER" id="PTHR43475:SF1">
    <property type="entry name" value="METHYLTHIORIBOSE-1-PHOSPHATE ISOMERASE"/>
    <property type="match status" value="1"/>
</dbReference>
<dbReference type="Pfam" id="PF01008">
    <property type="entry name" value="IF-2B"/>
    <property type="match status" value="1"/>
</dbReference>
<dbReference type="SUPFAM" id="SSF100950">
    <property type="entry name" value="NagB/RpiA/CoA transferase-like"/>
    <property type="match status" value="1"/>
</dbReference>
<protein>
    <recommendedName>
        <fullName evidence="1">Methylthioribose-1-phosphate isomerase</fullName>
        <shortName evidence="1">M1Pi</shortName>
        <shortName evidence="1">MTR-1-P isomerase</shortName>
        <ecNumber evidence="1">5.3.1.23</ecNumber>
    </recommendedName>
    <alternativeName>
        <fullName evidence="1">S-methyl-5-thioribose-1-phosphate isomerase</fullName>
    </alternativeName>
</protein>
<keyword id="KW-0028">Amino-acid biosynthesis</keyword>
<keyword id="KW-0413">Isomerase</keyword>
<keyword id="KW-0486">Methionine biosynthesis</keyword>
<keyword id="KW-1185">Reference proteome</keyword>
<evidence type="ECO:0000255" key="1">
    <source>
        <dbReference type="HAMAP-Rule" id="MF_01678"/>
    </source>
</evidence>
<evidence type="ECO:0000305" key="2"/>